<accession>Q5JR12</accession>
<accession>B3KSB7</accession>
<accession>Q6DKJ7</accession>
<accession>Q96EZ7</accession>
<accession>Q9UF84</accession>
<evidence type="ECO:0000250" key="1"/>
<evidence type="ECO:0000255" key="2">
    <source>
        <dbReference type="PROSITE-ProRule" id="PRU01082"/>
    </source>
</evidence>
<evidence type="ECO:0000256" key="3">
    <source>
        <dbReference type="SAM" id="MobiDB-lite"/>
    </source>
</evidence>
<evidence type="ECO:0000269" key="4">
    <source>
    </source>
</evidence>
<evidence type="ECO:0000269" key="5">
    <source>
    </source>
</evidence>
<evidence type="ECO:0000269" key="6">
    <source>
    </source>
</evidence>
<evidence type="ECO:0000269" key="7">
    <source ref="4"/>
</evidence>
<evidence type="ECO:0000303" key="8">
    <source>
    </source>
</evidence>
<evidence type="ECO:0000305" key="9"/>
<evidence type="ECO:0007744" key="10">
    <source>
    </source>
</evidence>
<evidence type="ECO:0007744" key="11">
    <source>
    </source>
</evidence>
<comment type="catalytic activity">
    <reaction>
        <text>O-phospho-L-seryl-[protein] + H2O = L-seryl-[protein] + phosphate</text>
        <dbReference type="Rhea" id="RHEA:20629"/>
        <dbReference type="Rhea" id="RHEA-COMP:9863"/>
        <dbReference type="Rhea" id="RHEA-COMP:11604"/>
        <dbReference type="ChEBI" id="CHEBI:15377"/>
        <dbReference type="ChEBI" id="CHEBI:29999"/>
        <dbReference type="ChEBI" id="CHEBI:43474"/>
        <dbReference type="ChEBI" id="CHEBI:83421"/>
        <dbReference type="EC" id="3.1.3.16"/>
    </reaction>
</comment>
<comment type="catalytic activity">
    <reaction>
        <text>O-phospho-L-threonyl-[protein] + H2O = L-threonyl-[protein] + phosphate</text>
        <dbReference type="Rhea" id="RHEA:47004"/>
        <dbReference type="Rhea" id="RHEA-COMP:11060"/>
        <dbReference type="Rhea" id="RHEA-COMP:11605"/>
        <dbReference type="ChEBI" id="CHEBI:15377"/>
        <dbReference type="ChEBI" id="CHEBI:30013"/>
        <dbReference type="ChEBI" id="CHEBI:43474"/>
        <dbReference type="ChEBI" id="CHEBI:61977"/>
        <dbReference type="EC" id="3.1.3.16"/>
    </reaction>
</comment>
<comment type="subunit">
    <text evidence="1">Interacts with UBE2I/UBC9.</text>
</comment>
<comment type="interaction">
    <interactant intactId="EBI-13292717">
        <id>Q5JR12</id>
    </interactant>
    <interactant intactId="EBI-10274069">
        <id>Q8TCE9</id>
        <label>LGALS14</label>
    </interactant>
    <organismsDiffer>false</organismsDiffer>
    <experiments>3</experiments>
</comment>
<comment type="interaction">
    <interactant intactId="EBI-13292717">
        <id>Q5JR12</id>
    </interactant>
    <interactant intactId="EBI-12014286">
        <id>Q494U1-3</id>
        <label>PLEKHN1</label>
    </interactant>
    <organismsDiffer>false</organismsDiffer>
    <experiments>3</experiments>
</comment>
<comment type="interaction">
    <interactant intactId="EBI-13292717">
        <id>Q5JR12</id>
    </interactant>
    <interactant intactId="EBI-358489">
        <id>Q96GM5</id>
        <label>SMARCD1</label>
    </interactant>
    <organismsDiffer>false</organismsDiffer>
    <experiments>3</experiments>
</comment>
<comment type="interaction">
    <interactant intactId="EBI-13292717">
        <id>Q5JR12</id>
    </interactant>
    <interactant intactId="EBI-742688">
        <id>Q9NZD8</id>
        <label>SPG21</label>
    </interactant>
    <organismsDiffer>false</organismsDiffer>
    <experiments>3</experiments>
</comment>
<comment type="alternative products">
    <event type="alternative splicing"/>
    <isoform>
        <id>Q5JR12-1</id>
        <name>1</name>
        <sequence type="displayed"/>
    </isoform>
    <isoform>
        <id>Q5JR12-2</id>
        <name>2</name>
        <sequence type="described" ref="VSP_025882 VSP_025883"/>
    </isoform>
</comment>
<comment type="similarity">
    <text evidence="9">Belongs to the PP2C family.</text>
</comment>
<gene>
    <name type="primary">PPM1J</name>
    <name type="synonym">PPP2CZ</name>
</gene>
<protein>
    <recommendedName>
        <fullName>Protein phosphatase 1J</fullName>
        <ecNumber>3.1.3.16</ecNumber>
    </recommendedName>
    <alternativeName>
        <fullName>Protein phosphatase 2C isoform zeta</fullName>
        <shortName>PP2C-zeta</shortName>
    </alternativeName>
</protein>
<feature type="chain" id="PRO_0000289058" description="Protein phosphatase 1J">
    <location>
        <begin position="1"/>
        <end position="505"/>
    </location>
</feature>
<feature type="domain" description="PPM-type phosphatase" evidence="2">
    <location>
        <begin position="104"/>
        <end position="498"/>
    </location>
</feature>
<feature type="region of interest" description="Disordered" evidence="3">
    <location>
        <begin position="1"/>
        <end position="103"/>
    </location>
</feature>
<feature type="compositionally biased region" description="Low complexity" evidence="3">
    <location>
        <begin position="27"/>
        <end position="50"/>
    </location>
</feature>
<feature type="modified residue" description="Phosphoserine" evidence="11">
    <location>
        <position position="66"/>
    </location>
</feature>
<feature type="modified residue" description="Phosphoserine" evidence="10 11">
    <location>
        <position position="76"/>
    </location>
</feature>
<feature type="splice variant" id="VSP_025882" description="In isoform 2." evidence="8">
    <location>
        <begin position="1"/>
        <end position="167"/>
    </location>
</feature>
<feature type="splice variant" id="VSP_025883" description="In isoform 2." evidence="8">
    <location>
        <begin position="185"/>
        <end position="223"/>
    </location>
</feature>
<feature type="sequence variant" id="VAR_032566" description="In dbSNP:rs34611728.">
    <original>L</original>
    <variation>F</variation>
    <location>
        <position position="213"/>
    </location>
</feature>
<feature type="sequence variant" id="VAR_032567" description="In dbSNP:rs10857971." evidence="4 5 6 7">
    <original>V</original>
    <variation>I</variation>
    <location>
        <position position="236"/>
    </location>
</feature>
<dbReference type="EC" id="3.1.3.16"/>
<dbReference type="EMBL" id="AK093270">
    <property type="protein sequence ID" value="BAG52679.1"/>
    <property type="molecule type" value="mRNA"/>
</dbReference>
<dbReference type="EMBL" id="AL133644">
    <property type="protein sequence ID" value="CAB63764.1"/>
    <property type="molecule type" value="mRNA"/>
</dbReference>
<dbReference type="EMBL" id="AL603832">
    <property type="status" value="NOT_ANNOTATED_CDS"/>
    <property type="molecule type" value="Genomic_DNA"/>
</dbReference>
<dbReference type="EMBL" id="CH471122">
    <property type="protein sequence ID" value="EAW56543.1"/>
    <property type="molecule type" value="Genomic_DNA"/>
</dbReference>
<dbReference type="EMBL" id="BC011803">
    <property type="protein sequence ID" value="AAH11803.2"/>
    <property type="molecule type" value="mRNA"/>
</dbReference>
<dbReference type="EMBL" id="BC073828">
    <property type="protein sequence ID" value="AAH73828.1"/>
    <property type="molecule type" value="mRNA"/>
</dbReference>
<dbReference type="CCDS" id="CCDS855.2">
    <molecule id="Q5JR12-1"/>
</dbReference>
<dbReference type="PIR" id="T43442">
    <property type="entry name" value="T43442"/>
</dbReference>
<dbReference type="RefSeq" id="NP_005158.5">
    <molecule id="Q5JR12-1"/>
    <property type="nucleotide sequence ID" value="NM_005167.5"/>
</dbReference>
<dbReference type="SMR" id="Q5JR12"/>
<dbReference type="BioGRID" id="130612">
    <property type="interactions" value="33"/>
</dbReference>
<dbReference type="ELM" id="Q5JR12"/>
<dbReference type="FunCoup" id="Q5JR12">
    <property type="interactions" value="104"/>
</dbReference>
<dbReference type="IntAct" id="Q5JR12">
    <property type="interactions" value="24"/>
</dbReference>
<dbReference type="MINT" id="Q5JR12"/>
<dbReference type="STRING" id="9606.ENSP00000308926"/>
<dbReference type="DEPOD" id="PPM1J"/>
<dbReference type="GlyGen" id="Q5JR12">
    <property type="glycosylation" value="2 sites, 1 O-linked glycan (1 site)"/>
</dbReference>
<dbReference type="iPTMnet" id="Q5JR12"/>
<dbReference type="PhosphoSitePlus" id="Q5JR12"/>
<dbReference type="BioMuta" id="PPM1J"/>
<dbReference type="DMDM" id="74741784"/>
<dbReference type="jPOST" id="Q5JR12"/>
<dbReference type="MassIVE" id="Q5JR12"/>
<dbReference type="PaxDb" id="9606-ENSP00000308926"/>
<dbReference type="PeptideAtlas" id="Q5JR12"/>
<dbReference type="ProteomicsDB" id="63067">
    <molecule id="Q5JR12-1"/>
</dbReference>
<dbReference type="ProteomicsDB" id="63068">
    <molecule id="Q5JR12-2"/>
</dbReference>
<dbReference type="Pumba" id="Q5JR12"/>
<dbReference type="Antibodypedia" id="33835">
    <property type="antibodies" value="87 antibodies from 22 providers"/>
</dbReference>
<dbReference type="DNASU" id="333926"/>
<dbReference type="Ensembl" id="ENST00000309276.11">
    <molecule id="Q5JR12-1"/>
    <property type="protein sequence ID" value="ENSP00000308926.6"/>
    <property type="gene ID" value="ENSG00000155367.16"/>
</dbReference>
<dbReference type="Ensembl" id="ENST00000464951.1">
    <molecule id="Q5JR12-2"/>
    <property type="protein sequence ID" value="ENSP00000475711.1"/>
    <property type="gene ID" value="ENSG00000155367.16"/>
</dbReference>
<dbReference type="GeneID" id="333926"/>
<dbReference type="KEGG" id="hsa:333926"/>
<dbReference type="MANE-Select" id="ENST00000309276.11">
    <property type="protein sequence ID" value="ENSP00000308926.6"/>
    <property type="RefSeq nucleotide sequence ID" value="NM_005167.7"/>
    <property type="RefSeq protein sequence ID" value="NP_005158.5"/>
</dbReference>
<dbReference type="UCSC" id="uc001ecs.2">
    <molecule id="Q5JR12-1"/>
    <property type="organism name" value="human"/>
</dbReference>
<dbReference type="AGR" id="HGNC:20785"/>
<dbReference type="CTD" id="333926"/>
<dbReference type="DisGeNET" id="333926"/>
<dbReference type="GeneCards" id="PPM1J"/>
<dbReference type="HGNC" id="HGNC:20785">
    <property type="gene designation" value="PPM1J"/>
</dbReference>
<dbReference type="HPA" id="ENSG00000155367">
    <property type="expression patterns" value="Tissue enhanced (skeletal muscle, testis)"/>
</dbReference>
<dbReference type="MIM" id="609957">
    <property type="type" value="gene"/>
</dbReference>
<dbReference type="neXtProt" id="NX_Q5JR12"/>
<dbReference type="OpenTargets" id="ENSG00000155367"/>
<dbReference type="PharmGKB" id="PA142671150"/>
<dbReference type="VEuPathDB" id="HostDB:ENSG00000155367"/>
<dbReference type="eggNOG" id="KOG1323">
    <property type="taxonomic scope" value="Eukaryota"/>
</dbReference>
<dbReference type="GeneTree" id="ENSGT00940000160965"/>
<dbReference type="HOGENOM" id="CLU_029072_0_0_1"/>
<dbReference type="InParanoid" id="Q5JR12"/>
<dbReference type="OMA" id="RDHSMTG"/>
<dbReference type="OrthoDB" id="10264738at2759"/>
<dbReference type="PAN-GO" id="Q5JR12">
    <property type="GO annotations" value="1 GO annotation based on evolutionary models"/>
</dbReference>
<dbReference type="PhylomeDB" id="Q5JR12"/>
<dbReference type="TreeFam" id="TF314700"/>
<dbReference type="PathwayCommons" id="Q5JR12"/>
<dbReference type="SignaLink" id="Q5JR12"/>
<dbReference type="SIGNOR" id="Q5JR12"/>
<dbReference type="BioGRID-ORCS" id="333926">
    <property type="hits" value="38 hits in 1162 CRISPR screens"/>
</dbReference>
<dbReference type="ChiTaRS" id="PPM1J">
    <property type="organism name" value="human"/>
</dbReference>
<dbReference type="GenomeRNAi" id="333926"/>
<dbReference type="Pharos" id="Q5JR12">
    <property type="development level" value="Tdark"/>
</dbReference>
<dbReference type="PRO" id="PR:Q5JR12"/>
<dbReference type="Proteomes" id="UP000005640">
    <property type="component" value="Chromosome 1"/>
</dbReference>
<dbReference type="RNAct" id="Q5JR12">
    <property type="molecule type" value="protein"/>
</dbReference>
<dbReference type="Bgee" id="ENSG00000155367">
    <property type="expression patterns" value="Expressed in right testis and 97 other cell types or tissues"/>
</dbReference>
<dbReference type="ExpressionAtlas" id="Q5JR12">
    <property type="expression patterns" value="baseline and differential"/>
</dbReference>
<dbReference type="GO" id="GO:0005739">
    <property type="term" value="C:mitochondrion"/>
    <property type="evidence" value="ECO:0000318"/>
    <property type="project" value="GO_Central"/>
</dbReference>
<dbReference type="GO" id="GO:0004741">
    <property type="term" value="F:[pyruvate dehydrogenase (acetyl-transferring)]-phosphatase activity"/>
    <property type="evidence" value="ECO:0000318"/>
    <property type="project" value="GO_Central"/>
</dbReference>
<dbReference type="GO" id="GO:0007165">
    <property type="term" value="P:signal transduction"/>
    <property type="evidence" value="ECO:0000318"/>
    <property type="project" value="GO_Central"/>
</dbReference>
<dbReference type="CDD" id="cd00143">
    <property type="entry name" value="PP2Cc"/>
    <property type="match status" value="1"/>
</dbReference>
<dbReference type="Gene3D" id="3.60.40.10">
    <property type="entry name" value="PPM-type phosphatase domain"/>
    <property type="match status" value="1"/>
</dbReference>
<dbReference type="InterPro" id="IPR015655">
    <property type="entry name" value="PP2C"/>
</dbReference>
<dbReference type="InterPro" id="IPR036457">
    <property type="entry name" value="PPM-type-like_dom_sf"/>
</dbReference>
<dbReference type="InterPro" id="IPR001932">
    <property type="entry name" value="PPM-type_phosphatase-like_dom"/>
</dbReference>
<dbReference type="PANTHER" id="PTHR13832:SF305">
    <property type="entry name" value="PROTEIN PHOSPHATASE 1J"/>
    <property type="match status" value="1"/>
</dbReference>
<dbReference type="PANTHER" id="PTHR13832">
    <property type="entry name" value="PROTEIN PHOSPHATASE 2C"/>
    <property type="match status" value="1"/>
</dbReference>
<dbReference type="Pfam" id="PF00481">
    <property type="entry name" value="PP2C"/>
    <property type="match status" value="2"/>
</dbReference>
<dbReference type="SMART" id="SM00332">
    <property type="entry name" value="PP2Cc"/>
    <property type="match status" value="1"/>
</dbReference>
<dbReference type="SUPFAM" id="SSF81606">
    <property type="entry name" value="PP2C-like"/>
    <property type="match status" value="1"/>
</dbReference>
<dbReference type="PROSITE" id="PS51746">
    <property type="entry name" value="PPM_2"/>
    <property type="match status" value="1"/>
</dbReference>
<proteinExistence type="evidence at protein level"/>
<organism>
    <name type="scientific">Homo sapiens</name>
    <name type="common">Human</name>
    <dbReference type="NCBI Taxonomy" id="9606"/>
    <lineage>
        <taxon>Eukaryota</taxon>
        <taxon>Metazoa</taxon>
        <taxon>Chordata</taxon>
        <taxon>Craniata</taxon>
        <taxon>Vertebrata</taxon>
        <taxon>Euteleostomi</taxon>
        <taxon>Mammalia</taxon>
        <taxon>Eutheria</taxon>
        <taxon>Euarchontoglires</taxon>
        <taxon>Primates</taxon>
        <taxon>Haplorrhini</taxon>
        <taxon>Catarrhini</taxon>
        <taxon>Hominidae</taxon>
        <taxon>Homo</taxon>
    </lineage>
</organism>
<keyword id="KW-0025">Alternative splicing</keyword>
<keyword id="KW-0378">Hydrolase</keyword>
<keyword id="KW-0597">Phosphoprotein</keyword>
<keyword id="KW-0904">Protein phosphatase</keyword>
<keyword id="KW-1267">Proteomics identification</keyword>
<keyword id="KW-1185">Reference proteome</keyword>
<name>PPM1J_HUMAN</name>
<sequence length="505" mass="54834">MLNRVRSAVAHLVSSGGAPPPRPKSPDLPNAASAPPAAAPEAPRSPPAKAGSGSATPAKAVEARASFSRPTFLQLSPGGLRRADDHAGRAVQSPPDTGRRLPWSTGYAEVINAGKSRHNEDQACCEVVYVEGRRSVTGVPREPSRGQGLCFYYWGLFDGHAGGGAAEMASRLLHRHIREQLKDLVEILQDPSPPPLCLPTTPGTPDSSDPSHLLGPQSCWSSQKEVSHESLVVGAVENAFQLMDEQMARERRGHQVEGGCCALVVIYLLGKVYVANAGDSRAIIVRNGEIIPMSREFTPETERQRLQLLGFLKPELLGSEFTHLEFPRRVLPKELGQRMLYRDQNMTGWAYKKIELEDLRFPLVCGEGKKARVMATIGVTRGLGDHSLKVCSSTLPIKPFLSCFPEVRVYDLTQYEHCPDDVLVLGTDGLWDVTTDCEVAATVDRVLSAYEPNDHSRYTALAQALVLGARGTPRDRGWRLPNNKLGSGDDISVFVIPLGGPGSYS</sequence>
<reference key="1">
    <citation type="journal article" date="2004" name="Nat. Genet.">
        <title>Complete sequencing and characterization of 21,243 full-length human cDNAs.</title>
        <authorList>
            <person name="Ota T."/>
            <person name="Suzuki Y."/>
            <person name="Nishikawa T."/>
            <person name="Otsuki T."/>
            <person name="Sugiyama T."/>
            <person name="Irie R."/>
            <person name="Wakamatsu A."/>
            <person name="Hayashi K."/>
            <person name="Sato H."/>
            <person name="Nagai K."/>
            <person name="Kimura K."/>
            <person name="Makita H."/>
            <person name="Sekine M."/>
            <person name="Obayashi M."/>
            <person name="Nishi T."/>
            <person name="Shibahara T."/>
            <person name="Tanaka T."/>
            <person name="Ishii S."/>
            <person name="Yamamoto J."/>
            <person name="Saito K."/>
            <person name="Kawai Y."/>
            <person name="Isono Y."/>
            <person name="Nakamura Y."/>
            <person name="Nagahari K."/>
            <person name="Murakami K."/>
            <person name="Yasuda T."/>
            <person name="Iwayanagi T."/>
            <person name="Wagatsuma M."/>
            <person name="Shiratori A."/>
            <person name="Sudo H."/>
            <person name="Hosoiri T."/>
            <person name="Kaku Y."/>
            <person name="Kodaira H."/>
            <person name="Kondo H."/>
            <person name="Sugawara M."/>
            <person name="Takahashi M."/>
            <person name="Kanda K."/>
            <person name="Yokoi T."/>
            <person name="Furuya T."/>
            <person name="Kikkawa E."/>
            <person name="Omura Y."/>
            <person name="Abe K."/>
            <person name="Kamihara K."/>
            <person name="Katsuta N."/>
            <person name="Sato K."/>
            <person name="Tanikawa M."/>
            <person name="Yamazaki M."/>
            <person name="Ninomiya K."/>
            <person name="Ishibashi T."/>
            <person name="Yamashita H."/>
            <person name="Murakawa K."/>
            <person name="Fujimori K."/>
            <person name="Tanai H."/>
            <person name="Kimata M."/>
            <person name="Watanabe M."/>
            <person name="Hiraoka S."/>
            <person name="Chiba Y."/>
            <person name="Ishida S."/>
            <person name="Ono Y."/>
            <person name="Takiguchi S."/>
            <person name="Watanabe S."/>
            <person name="Yosida M."/>
            <person name="Hotuta T."/>
            <person name="Kusano J."/>
            <person name="Kanehori K."/>
            <person name="Takahashi-Fujii A."/>
            <person name="Hara H."/>
            <person name="Tanase T.-O."/>
            <person name="Nomura Y."/>
            <person name="Togiya S."/>
            <person name="Komai F."/>
            <person name="Hara R."/>
            <person name="Takeuchi K."/>
            <person name="Arita M."/>
            <person name="Imose N."/>
            <person name="Musashino K."/>
            <person name="Yuuki H."/>
            <person name="Oshima A."/>
            <person name="Sasaki N."/>
            <person name="Aotsuka S."/>
            <person name="Yoshikawa Y."/>
            <person name="Matsunawa H."/>
            <person name="Ichihara T."/>
            <person name="Shiohata N."/>
            <person name="Sano S."/>
            <person name="Moriya S."/>
            <person name="Momiyama H."/>
            <person name="Satoh N."/>
            <person name="Takami S."/>
            <person name="Terashima Y."/>
            <person name="Suzuki O."/>
            <person name="Nakagawa S."/>
            <person name="Senoh A."/>
            <person name="Mizoguchi H."/>
            <person name="Goto Y."/>
            <person name="Shimizu F."/>
            <person name="Wakebe H."/>
            <person name="Hishigaki H."/>
            <person name="Watanabe T."/>
            <person name="Sugiyama A."/>
            <person name="Takemoto M."/>
            <person name="Kawakami B."/>
            <person name="Yamazaki M."/>
            <person name="Watanabe K."/>
            <person name="Kumagai A."/>
            <person name="Itakura S."/>
            <person name="Fukuzumi Y."/>
            <person name="Fujimori Y."/>
            <person name="Komiyama M."/>
            <person name="Tashiro H."/>
            <person name="Tanigami A."/>
            <person name="Fujiwara T."/>
            <person name="Ono T."/>
            <person name="Yamada K."/>
            <person name="Fujii Y."/>
            <person name="Ozaki K."/>
            <person name="Hirao M."/>
            <person name="Ohmori Y."/>
            <person name="Kawabata A."/>
            <person name="Hikiji T."/>
            <person name="Kobatake N."/>
            <person name="Inagaki H."/>
            <person name="Ikema Y."/>
            <person name="Okamoto S."/>
            <person name="Okitani R."/>
            <person name="Kawakami T."/>
            <person name="Noguchi S."/>
            <person name="Itoh T."/>
            <person name="Shigeta K."/>
            <person name="Senba T."/>
            <person name="Matsumura K."/>
            <person name="Nakajima Y."/>
            <person name="Mizuno T."/>
            <person name="Morinaga M."/>
            <person name="Sasaki M."/>
            <person name="Togashi T."/>
            <person name="Oyama M."/>
            <person name="Hata H."/>
            <person name="Watanabe M."/>
            <person name="Komatsu T."/>
            <person name="Mizushima-Sugano J."/>
            <person name="Satoh T."/>
            <person name="Shirai Y."/>
            <person name="Takahashi Y."/>
            <person name="Nakagawa K."/>
            <person name="Okumura K."/>
            <person name="Nagase T."/>
            <person name="Nomura N."/>
            <person name="Kikuchi H."/>
            <person name="Masuho Y."/>
            <person name="Yamashita R."/>
            <person name="Nakai K."/>
            <person name="Yada T."/>
            <person name="Nakamura Y."/>
            <person name="Ohara O."/>
            <person name="Isogai T."/>
            <person name="Sugano S."/>
        </authorList>
    </citation>
    <scope>NUCLEOTIDE SEQUENCE [LARGE SCALE MRNA] (ISOFORM 1)</scope>
    <scope>VARIANT ILE-236</scope>
    <source>
        <tissue>Testis</tissue>
    </source>
</reference>
<reference key="2">
    <citation type="journal article" date="2007" name="BMC Genomics">
        <title>The full-ORF clone resource of the German cDNA consortium.</title>
        <authorList>
            <person name="Bechtel S."/>
            <person name="Rosenfelder H."/>
            <person name="Duda A."/>
            <person name="Schmidt C.P."/>
            <person name="Ernst U."/>
            <person name="Wellenreuther R."/>
            <person name="Mehrle A."/>
            <person name="Schuster C."/>
            <person name="Bahr A."/>
            <person name="Bloecker H."/>
            <person name="Heubner D."/>
            <person name="Hoerlein A."/>
            <person name="Michel G."/>
            <person name="Wedler H."/>
            <person name="Koehrer K."/>
            <person name="Ottenwaelder B."/>
            <person name="Poustka A."/>
            <person name="Wiemann S."/>
            <person name="Schupp I."/>
        </authorList>
    </citation>
    <scope>NUCLEOTIDE SEQUENCE [LARGE SCALE MRNA] (ISOFORM 2)</scope>
    <scope>VARIANT ILE-236</scope>
    <source>
        <tissue>Testis</tissue>
    </source>
</reference>
<reference key="3">
    <citation type="journal article" date="2006" name="Nature">
        <title>The DNA sequence and biological annotation of human chromosome 1.</title>
        <authorList>
            <person name="Gregory S.G."/>
            <person name="Barlow K.F."/>
            <person name="McLay K.E."/>
            <person name="Kaul R."/>
            <person name="Swarbreck D."/>
            <person name="Dunham A."/>
            <person name="Scott C.E."/>
            <person name="Howe K.L."/>
            <person name="Woodfine K."/>
            <person name="Spencer C.C.A."/>
            <person name="Jones M.C."/>
            <person name="Gillson C."/>
            <person name="Searle S."/>
            <person name="Zhou Y."/>
            <person name="Kokocinski F."/>
            <person name="McDonald L."/>
            <person name="Evans R."/>
            <person name="Phillips K."/>
            <person name="Atkinson A."/>
            <person name="Cooper R."/>
            <person name="Jones C."/>
            <person name="Hall R.E."/>
            <person name="Andrews T.D."/>
            <person name="Lloyd C."/>
            <person name="Ainscough R."/>
            <person name="Almeida J.P."/>
            <person name="Ambrose K.D."/>
            <person name="Anderson F."/>
            <person name="Andrew R.W."/>
            <person name="Ashwell R.I.S."/>
            <person name="Aubin K."/>
            <person name="Babbage A.K."/>
            <person name="Bagguley C.L."/>
            <person name="Bailey J."/>
            <person name="Beasley H."/>
            <person name="Bethel G."/>
            <person name="Bird C.P."/>
            <person name="Bray-Allen S."/>
            <person name="Brown J.Y."/>
            <person name="Brown A.J."/>
            <person name="Buckley D."/>
            <person name="Burton J."/>
            <person name="Bye J."/>
            <person name="Carder C."/>
            <person name="Chapman J.C."/>
            <person name="Clark S.Y."/>
            <person name="Clarke G."/>
            <person name="Clee C."/>
            <person name="Cobley V."/>
            <person name="Collier R.E."/>
            <person name="Corby N."/>
            <person name="Coville G.J."/>
            <person name="Davies J."/>
            <person name="Deadman R."/>
            <person name="Dunn M."/>
            <person name="Earthrowl M."/>
            <person name="Ellington A.G."/>
            <person name="Errington H."/>
            <person name="Frankish A."/>
            <person name="Frankland J."/>
            <person name="French L."/>
            <person name="Garner P."/>
            <person name="Garnett J."/>
            <person name="Gay L."/>
            <person name="Ghori M.R.J."/>
            <person name="Gibson R."/>
            <person name="Gilby L.M."/>
            <person name="Gillett W."/>
            <person name="Glithero R.J."/>
            <person name="Grafham D.V."/>
            <person name="Griffiths C."/>
            <person name="Griffiths-Jones S."/>
            <person name="Grocock R."/>
            <person name="Hammond S."/>
            <person name="Harrison E.S.I."/>
            <person name="Hart E."/>
            <person name="Haugen E."/>
            <person name="Heath P.D."/>
            <person name="Holmes S."/>
            <person name="Holt K."/>
            <person name="Howden P.J."/>
            <person name="Hunt A.R."/>
            <person name="Hunt S.E."/>
            <person name="Hunter G."/>
            <person name="Isherwood J."/>
            <person name="James R."/>
            <person name="Johnson C."/>
            <person name="Johnson D."/>
            <person name="Joy A."/>
            <person name="Kay M."/>
            <person name="Kershaw J.K."/>
            <person name="Kibukawa M."/>
            <person name="Kimberley A.M."/>
            <person name="King A."/>
            <person name="Knights A.J."/>
            <person name="Lad H."/>
            <person name="Laird G."/>
            <person name="Lawlor S."/>
            <person name="Leongamornlert D.A."/>
            <person name="Lloyd D.M."/>
            <person name="Loveland J."/>
            <person name="Lovell J."/>
            <person name="Lush M.J."/>
            <person name="Lyne R."/>
            <person name="Martin S."/>
            <person name="Mashreghi-Mohammadi M."/>
            <person name="Matthews L."/>
            <person name="Matthews N.S.W."/>
            <person name="McLaren S."/>
            <person name="Milne S."/>
            <person name="Mistry S."/>
            <person name="Moore M.J.F."/>
            <person name="Nickerson T."/>
            <person name="O'Dell C.N."/>
            <person name="Oliver K."/>
            <person name="Palmeiri A."/>
            <person name="Palmer S.A."/>
            <person name="Parker A."/>
            <person name="Patel D."/>
            <person name="Pearce A.V."/>
            <person name="Peck A.I."/>
            <person name="Pelan S."/>
            <person name="Phelps K."/>
            <person name="Phillimore B.J."/>
            <person name="Plumb R."/>
            <person name="Rajan J."/>
            <person name="Raymond C."/>
            <person name="Rouse G."/>
            <person name="Saenphimmachak C."/>
            <person name="Sehra H.K."/>
            <person name="Sheridan E."/>
            <person name="Shownkeen R."/>
            <person name="Sims S."/>
            <person name="Skuce C.D."/>
            <person name="Smith M."/>
            <person name="Steward C."/>
            <person name="Subramanian S."/>
            <person name="Sycamore N."/>
            <person name="Tracey A."/>
            <person name="Tromans A."/>
            <person name="Van Helmond Z."/>
            <person name="Wall M."/>
            <person name="Wallis J.M."/>
            <person name="White S."/>
            <person name="Whitehead S.L."/>
            <person name="Wilkinson J.E."/>
            <person name="Willey D.L."/>
            <person name="Williams H."/>
            <person name="Wilming L."/>
            <person name="Wray P.W."/>
            <person name="Wu Z."/>
            <person name="Coulson A."/>
            <person name="Vaudin M."/>
            <person name="Sulston J.E."/>
            <person name="Durbin R.M."/>
            <person name="Hubbard T."/>
            <person name="Wooster R."/>
            <person name="Dunham I."/>
            <person name="Carter N.P."/>
            <person name="McVean G."/>
            <person name="Ross M.T."/>
            <person name="Harrow J."/>
            <person name="Olson M.V."/>
            <person name="Beck S."/>
            <person name="Rogers J."/>
            <person name="Bentley D.R."/>
        </authorList>
    </citation>
    <scope>NUCLEOTIDE SEQUENCE [LARGE SCALE GENOMIC DNA]</scope>
</reference>
<reference key="4">
    <citation type="submission" date="2005-07" db="EMBL/GenBank/DDBJ databases">
        <authorList>
            <person name="Mural R.J."/>
            <person name="Istrail S."/>
            <person name="Sutton G.G."/>
            <person name="Florea L."/>
            <person name="Halpern A.L."/>
            <person name="Mobarry C.M."/>
            <person name="Lippert R."/>
            <person name="Walenz B."/>
            <person name="Shatkay H."/>
            <person name="Dew I."/>
            <person name="Miller J.R."/>
            <person name="Flanigan M.J."/>
            <person name="Edwards N.J."/>
            <person name="Bolanos R."/>
            <person name="Fasulo D."/>
            <person name="Halldorsson B.V."/>
            <person name="Hannenhalli S."/>
            <person name="Turner R."/>
            <person name="Yooseph S."/>
            <person name="Lu F."/>
            <person name="Nusskern D.R."/>
            <person name="Shue B.C."/>
            <person name="Zheng X.H."/>
            <person name="Zhong F."/>
            <person name="Delcher A.L."/>
            <person name="Huson D.H."/>
            <person name="Kravitz S.A."/>
            <person name="Mouchard L."/>
            <person name="Reinert K."/>
            <person name="Remington K.A."/>
            <person name="Clark A.G."/>
            <person name="Waterman M.S."/>
            <person name="Eichler E.E."/>
            <person name="Adams M.D."/>
            <person name="Hunkapiller M.W."/>
            <person name="Myers E.W."/>
            <person name="Venter J.C."/>
        </authorList>
    </citation>
    <scope>NUCLEOTIDE SEQUENCE [LARGE SCALE GENOMIC DNA]</scope>
    <scope>VARIANT ILE-236</scope>
</reference>
<reference key="5">
    <citation type="journal article" date="2004" name="Genome Res.">
        <title>The status, quality, and expansion of the NIH full-length cDNA project: the Mammalian Gene Collection (MGC).</title>
        <authorList>
            <consortium name="The MGC Project Team"/>
        </authorList>
    </citation>
    <scope>NUCLEOTIDE SEQUENCE [LARGE SCALE MRNA] (ISOFORM 1)</scope>
    <scope>VARIANT ILE-236</scope>
    <source>
        <tissue>B-cell</tissue>
        <tissue>Brain</tissue>
    </source>
</reference>
<reference key="6">
    <citation type="journal article" date="2008" name="Proc. Natl. Acad. Sci. U.S.A.">
        <title>A quantitative atlas of mitotic phosphorylation.</title>
        <authorList>
            <person name="Dephoure N."/>
            <person name="Zhou C."/>
            <person name="Villen J."/>
            <person name="Beausoleil S.A."/>
            <person name="Bakalarski C.E."/>
            <person name="Elledge S.J."/>
            <person name="Gygi S.P."/>
        </authorList>
    </citation>
    <scope>PHOSPHORYLATION [LARGE SCALE ANALYSIS] AT SER-76</scope>
    <scope>IDENTIFICATION BY MASS SPECTROMETRY [LARGE SCALE ANALYSIS]</scope>
    <source>
        <tissue>Cervix carcinoma</tissue>
    </source>
</reference>
<reference key="7">
    <citation type="journal article" date="2013" name="J. Proteome Res.">
        <title>Toward a comprehensive characterization of a human cancer cell phosphoproteome.</title>
        <authorList>
            <person name="Zhou H."/>
            <person name="Di Palma S."/>
            <person name="Preisinger C."/>
            <person name="Peng M."/>
            <person name="Polat A.N."/>
            <person name="Heck A.J."/>
            <person name="Mohammed S."/>
        </authorList>
    </citation>
    <scope>PHOSPHORYLATION [LARGE SCALE ANALYSIS] AT SER-66 AND SER-76</scope>
    <scope>IDENTIFICATION BY MASS SPECTROMETRY [LARGE SCALE ANALYSIS]</scope>
    <source>
        <tissue>Erythroleukemia</tissue>
    </source>
</reference>